<feature type="chain" id="PRO_0000266996" description="Enolase">
    <location>
        <begin position="1"/>
        <end position="431"/>
    </location>
</feature>
<feature type="active site" description="Proton donor" evidence="1">
    <location>
        <position position="217"/>
    </location>
</feature>
<feature type="active site" description="Proton acceptor" evidence="1">
    <location>
        <position position="347"/>
    </location>
</feature>
<feature type="binding site" evidence="1">
    <location>
        <position position="175"/>
    </location>
    <ligand>
        <name>(2R)-2-phosphoglycerate</name>
        <dbReference type="ChEBI" id="CHEBI:58289"/>
    </ligand>
</feature>
<feature type="binding site" evidence="1">
    <location>
        <position position="254"/>
    </location>
    <ligand>
        <name>Mg(2+)</name>
        <dbReference type="ChEBI" id="CHEBI:18420"/>
    </ligand>
</feature>
<feature type="binding site" evidence="1">
    <location>
        <position position="295"/>
    </location>
    <ligand>
        <name>Mg(2+)</name>
        <dbReference type="ChEBI" id="CHEBI:18420"/>
    </ligand>
</feature>
<feature type="binding site" evidence="1">
    <location>
        <position position="322"/>
    </location>
    <ligand>
        <name>Mg(2+)</name>
        <dbReference type="ChEBI" id="CHEBI:18420"/>
    </ligand>
</feature>
<feature type="binding site" evidence="1">
    <location>
        <position position="347"/>
    </location>
    <ligand>
        <name>(2R)-2-phosphoglycerate</name>
        <dbReference type="ChEBI" id="CHEBI:58289"/>
    </ligand>
</feature>
<feature type="binding site" evidence="1">
    <location>
        <position position="376"/>
    </location>
    <ligand>
        <name>(2R)-2-phosphoglycerate</name>
        <dbReference type="ChEBI" id="CHEBI:58289"/>
    </ligand>
</feature>
<feature type="binding site" evidence="1">
    <location>
        <position position="377"/>
    </location>
    <ligand>
        <name>(2R)-2-phosphoglycerate</name>
        <dbReference type="ChEBI" id="CHEBI:58289"/>
    </ligand>
</feature>
<feature type="binding site" evidence="1">
    <location>
        <position position="398"/>
    </location>
    <ligand>
        <name>(2R)-2-phosphoglycerate</name>
        <dbReference type="ChEBI" id="CHEBI:58289"/>
    </ligand>
</feature>
<sequence length="431" mass="45891">MGVRAVVLSARSVAKINRVVARQILDSRGRPTVEVEVLLSDGAVGRVSVPSGASVGKFEAVELRDGDQAKYAGHGVLKPVQRVNTTVADSLAGVSPFDQRAVDEILLSLDGTKNKSKLGANATIGVSLAVAKAAADSVGIPLYKYLGGAVAREMPLPLVNVINGGLHADNLLDFQEFMIVPVGAKTFADAAQICAEVFYKLKEVLKKMGHSTNTGDEGGFAPNLENNTDVLDVLVEAIEKSGYRASSDVALAMDVAASTFYDGTSYKFSGKCLTSGELIACYEDMVSRYPIISIEDAMAESDIEGWKAVTKRLGDKIQLVGDDLFVTNPALIANGVENKLANAVLVKPNQIGTLTETIDAIRSAQRNNYNVIISHRSGETEDVTIAHIAVAANCGQIKSGSFSRSERLAKYNELLRIEEDLGKSALLYNVI</sequence>
<protein>
    <recommendedName>
        <fullName evidence="1">Enolase</fullName>
        <ecNumber evidence="1">4.2.1.11</ecNumber>
    </recommendedName>
    <alternativeName>
        <fullName evidence="1">2-phospho-D-glycerate hydro-lyase</fullName>
    </alternativeName>
    <alternativeName>
        <fullName evidence="1">2-phosphoglycerate dehydratase</fullName>
    </alternativeName>
</protein>
<keyword id="KW-0963">Cytoplasm</keyword>
<keyword id="KW-0324">Glycolysis</keyword>
<keyword id="KW-0456">Lyase</keyword>
<keyword id="KW-0460">Magnesium</keyword>
<keyword id="KW-0479">Metal-binding</keyword>
<keyword id="KW-0964">Secreted</keyword>
<dbReference type="EC" id="4.2.1.11" evidence="1"/>
<dbReference type="EMBL" id="CP000030">
    <property type="protein sequence ID" value="AAV86604.1"/>
    <property type="molecule type" value="Genomic_DNA"/>
</dbReference>
<dbReference type="RefSeq" id="WP_011114356.1">
    <property type="nucleotide sequence ID" value="NZ_AFMU01000024.1"/>
</dbReference>
<dbReference type="SMR" id="Q5PAS6"/>
<dbReference type="KEGG" id="ama:AM600"/>
<dbReference type="HOGENOM" id="CLU_031223_2_1_5"/>
<dbReference type="UniPathway" id="UPA00109">
    <property type="reaction ID" value="UER00187"/>
</dbReference>
<dbReference type="GO" id="GO:0009986">
    <property type="term" value="C:cell surface"/>
    <property type="evidence" value="ECO:0007669"/>
    <property type="project" value="UniProtKB-SubCell"/>
</dbReference>
<dbReference type="GO" id="GO:0005576">
    <property type="term" value="C:extracellular region"/>
    <property type="evidence" value="ECO:0007669"/>
    <property type="project" value="UniProtKB-SubCell"/>
</dbReference>
<dbReference type="GO" id="GO:0000015">
    <property type="term" value="C:phosphopyruvate hydratase complex"/>
    <property type="evidence" value="ECO:0007669"/>
    <property type="project" value="InterPro"/>
</dbReference>
<dbReference type="GO" id="GO:0000287">
    <property type="term" value="F:magnesium ion binding"/>
    <property type="evidence" value="ECO:0007669"/>
    <property type="project" value="UniProtKB-UniRule"/>
</dbReference>
<dbReference type="GO" id="GO:0004634">
    <property type="term" value="F:phosphopyruvate hydratase activity"/>
    <property type="evidence" value="ECO:0007669"/>
    <property type="project" value="UniProtKB-UniRule"/>
</dbReference>
<dbReference type="GO" id="GO:0006096">
    <property type="term" value="P:glycolytic process"/>
    <property type="evidence" value="ECO:0007669"/>
    <property type="project" value="UniProtKB-UniRule"/>
</dbReference>
<dbReference type="CDD" id="cd03313">
    <property type="entry name" value="enolase"/>
    <property type="match status" value="1"/>
</dbReference>
<dbReference type="Gene3D" id="3.20.20.120">
    <property type="entry name" value="Enolase-like C-terminal domain"/>
    <property type="match status" value="1"/>
</dbReference>
<dbReference type="Gene3D" id="3.30.390.10">
    <property type="entry name" value="Enolase-like, N-terminal domain"/>
    <property type="match status" value="1"/>
</dbReference>
<dbReference type="HAMAP" id="MF_00318">
    <property type="entry name" value="Enolase"/>
    <property type="match status" value="1"/>
</dbReference>
<dbReference type="InterPro" id="IPR000941">
    <property type="entry name" value="Enolase"/>
</dbReference>
<dbReference type="InterPro" id="IPR036849">
    <property type="entry name" value="Enolase-like_C_sf"/>
</dbReference>
<dbReference type="InterPro" id="IPR029017">
    <property type="entry name" value="Enolase-like_N"/>
</dbReference>
<dbReference type="InterPro" id="IPR020810">
    <property type="entry name" value="Enolase_C"/>
</dbReference>
<dbReference type="InterPro" id="IPR020809">
    <property type="entry name" value="Enolase_CS"/>
</dbReference>
<dbReference type="InterPro" id="IPR020811">
    <property type="entry name" value="Enolase_N"/>
</dbReference>
<dbReference type="NCBIfam" id="TIGR01060">
    <property type="entry name" value="eno"/>
    <property type="match status" value="1"/>
</dbReference>
<dbReference type="PANTHER" id="PTHR11902">
    <property type="entry name" value="ENOLASE"/>
    <property type="match status" value="1"/>
</dbReference>
<dbReference type="PANTHER" id="PTHR11902:SF1">
    <property type="entry name" value="ENOLASE"/>
    <property type="match status" value="1"/>
</dbReference>
<dbReference type="Pfam" id="PF00113">
    <property type="entry name" value="Enolase_C"/>
    <property type="match status" value="1"/>
</dbReference>
<dbReference type="Pfam" id="PF03952">
    <property type="entry name" value="Enolase_N"/>
    <property type="match status" value="1"/>
</dbReference>
<dbReference type="PIRSF" id="PIRSF001400">
    <property type="entry name" value="Enolase"/>
    <property type="match status" value="1"/>
</dbReference>
<dbReference type="PRINTS" id="PR00148">
    <property type="entry name" value="ENOLASE"/>
</dbReference>
<dbReference type="SFLD" id="SFLDS00001">
    <property type="entry name" value="Enolase"/>
    <property type="match status" value="1"/>
</dbReference>
<dbReference type="SFLD" id="SFLDF00002">
    <property type="entry name" value="enolase"/>
    <property type="match status" value="1"/>
</dbReference>
<dbReference type="SMART" id="SM01192">
    <property type="entry name" value="Enolase_C"/>
    <property type="match status" value="1"/>
</dbReference>
<dbReference type="SMART" id="SM01193">
    <property type="entry name" value="Enolase_N"/>
    <property type="match status" value="1"/>
</dbReference>
<dbReference type="SUPFAM" id="SSF51604">
    <property type="entry name" value="Enolase C-terminal domain-like"/>
    <property type="match status" value="1"/>
</dbReference>
<dbReference type="SUPFAM" id="SSF54826">
    <property type="entry name" value="Enolase N-terminal domain-like"/>
    <property type="match status" value="1"/>
</dbReference>
<dbReference type="PROSITE" id="PS00164">
    <property type="entry name" value="ENOLASE"/>
    <property type="match status" value="1"/>
</dbReference>
<reference key="1">
    <citation type="journal article" date="2005" name="Proc. Natl. Acad. Sci. U.S.A.">
        <title>Complete genome sequencing of Anaplasma marginale reveals that the surface is skewed to two superfamilies of outer membrane proteins.</title>
        <authorList>
            <person name="Brayton K.A."/>
            <person name="Kappmeyer L.S."/>
            <person name="Herndon D.R."/>
            <person name="Dark M.J."/>
            <person name="Tibbals D.L."/>
            <person name="Palmer G.H."/>
            <person name="McGuire T.C."/>
            <person name="Knowles D.P. Jr."/>
        </authorList>
    </citation>
    <scope>NUCLEOTIDE SEQUENCE [LARGE SCALE GENOMIC DNA]</scope>
    <source>
        <strain>St. Maries</strain>
    </source>
</reference>
<name>ENO_ANAMM</name>
<comment type="function">
    <text evidence="1">Catalyzes the reversible conversion of 2-phosphoglycerate (2-PG) into phosphoenolpyruvate (PEP). It is essential for the degradation of carbohydrates via glycolysis.</text>
</comment>
<comment type="catalytic activity">
    <reaction evidence="1">
        <text>(2R)-2-phosphoglycerate = phosphoenolpyruvate + H2O</text>
        <dbReference type="Rhea" id="RHEA:10164"/>
        <dbReference type="ChEBI" id="CHEBI:15377"/>
        <dbReference type="ChEBI" id="CHEBI:58289"/>
        <dbReference type="ChEBI" id="CHEBI:58702"/>
        <dbReference type="EC" id="4.2.1.11"/>
    </reaction>
</comment>
<comment type="cofactor">
    <cofactor evidence="1">
        <name>Mg(2+)</name>
        <dbReference type="ChEBI" id="CHEBI:18420"/>
    </cofactor>
    <text evidence="1">Binds a second Mg(2+) ion via substrate during catalysis.</text>
</comment>
<comment type="pathway">
    <text evidence="1">Carbohydrate degradation; glycolysis; pyruvate from D-glyceraldehyde 3-phosphate: step 4/5.</text>
</comment>
<comment type="subcellular location">
    <subcellularLocation>
        <location evidence="1">Cytoplasm</location>
    </subcellularLocation>
    <subcellularLocation>
        <location evidence="1">Secreted</location>
    </subcellularLocation>
    <subcellularLocation>
        <location evidence="1">Cell surface</location>
    </subcellularLocation>
    <text evidence="1">Fractions of enolase are present in both the cytoplasm and on the cell surface.</text>
</comment>
<comment type="similarity">
    <text evidence="1">Belongs to the enolase family.</text>
</comment>
<gene>
    <name evidence="1" type="primary">eno</name>
    <name type="ordered locus">AM600</name>
</gene>
<proteinExistence type="inferred from homology"/>
<accession>Q5PAS6</accession>
<organism>
    <name type="scientific">Anaplasma marginale (strain St. Maries)</name>
    <dbReference type="NCBI Taxonomy" id="234826"/>
    <lineage>
        <taxon>Bacteria</taxon>
        <taxon>Pseudomonadati</taxon>
        <taxon>Pseudomonadota</taxon>
        <taxon>Alphaproteobacteria</taxon>
        <taxon>Rickettsiales</taxon>
        <taxon>Anaplasmataceae</taxon>
        <taxon>Anaplasma</taxon>
    </lineage>
</organism>
<evidence type="ECO:0000255" key="1">
    <source>
        <dbReference type="HAMAP-Rule" id="MF_00318"/>
    </source>
</evidence>